<evidence type="ECO:0000250" key="1"/>
<evidence type="ECO:0000250" key="2">
    <source>
        <dbReference type="UniProtKB" id="P00785"/>
    </source>
</evidence>
<evidence type="ECO:0000250" key="3">
    <source>
        <dbReference type="UniProtKB" id="P07858"/>
    </source>
</evidence>
<evidence type="ECO:0000250" key="4">
    <source>
        <dbReference type="UniProtKB" id="P25250"/>
    </source>
</evidence>
<evidence type="ECO:0000250" key="5">
    <source>
        <dbReference type="UniProtKB" id="P25777"/>
    </source>
</evidence>
<evidence type="ECO:0000250" key="6">
    <source>
        <dbReference type="UniProtKB" id="P80884"/>
    </source>
</evidence>
<evidence type="ECO:0000255" key="7">
    <source>
        <dbReference type="PROSITE-ProRule" id="PRU00498"/>
    </source>
</evidence>
<evidence type="ECO:0000255" key="8">
    <source>
        <dbReference type="PROSITE-ProRule" id="PRU10088"/>
    </source>
</evidence>
<evidence type="ECO:0000255" key="9">
    <source>
        <dbReference type="PROSITE-ProRule" id="PRU10089"/>
    </source>
</evidence>
<evidence type="ECO:0000255" key="10">
    <source>
        <dbReference type="PROSITE-ProRule" id="PRU10090"/>
    </source>
</evidence>
<protein>
    <recommendedName>
        <fullName>Low-temperature-induced cysteine proteinase</fullName>
        <ecNumber evidence="6">3.4.22.-</ecNumber>
    </recommendedName>
</protein>
<reference key="1">
    <citation type="journal article" date="1988" name="Plant Physiol.">
        <title>Analysis of mRNAs that accumulate in response to low temperature identifies a thiolprotease in tomato.</title>
        <authorList>
            <person name="Schaffer M.A."/>
            <person name="Fischer R.L."/>
        </authorList>
    </citation>
    <scope>NUCLEOTIDE SEQUENCE [MRNA]</scope>
    <source>
        <strain>cv. VFNT Cherry</strain>
    </source>
</reference>
<organism>
    <name type="scientific">Solanum lycopersicum</name>
    <name type="common">Tomato</name>
    <name type="synonym">Lycopersicon esculentum</name>
    <dbReference type="NCBI Taxonomy" id="4081"/>
    <lineage>
        <taxon>Eukaryota</taxon>
        <taxon>Viridiplantae</taxon>
        <taxon>Streptophyta</taxon>
        <taxon>Embryophyta</taxon>
        <taxon>Tracheophyta</taxon>
        <taxon>Spermatophyta</taxon>
        <taxon>Magnoliopsida</taxon>
        <taxon>eudicotyledons</taxon>
        <taxon>Gunneridae</taxon>
        <taxon>Pentapetalae</taxon>
        <taxon>asterids</taxon>
        <taxon>lamiids</taxon>
        <taxon>Solanales</taxon>
        <taxon>Solanaceae</taxon>
        <taxon>Solanoideae</taxon>
        <taxon>Solaneae</taxon>
        <taxon>Solanum</taxon>
        <taxon>Solanum subgen. Lycopersicon</taxon>
    </lineage>
</organism>
<proteinExistence type="evidence at transcript level"/>
<sequence>KLSKNKSDRYLPKVGDSLPESIDWREKGVLVGVKDQGSCGSCWAFSAVAAMESINAIVTGNLISLSEQELVDCDRSYNEGCDGGLMDYAFEFVIKNGGIDTEEDYPYKERNGVCDQYRKNAKVVKIDSYEDVPVNNEKALQKAVAHQPVSIALEAGGRDFQHYKSGIFTGKCGTAVDHGVVIAGYGTENGMDYWIVRNSWGANCRENGYLRVQRNVSSSSGLCGLAIEPSYPVKTGPNPPKPAPSPPSPVKPPTECDEYSQCAVGTTCCCILQFRRSCFSWGCCPLEGATCCEDHYSCCPHDYPICNVRQGTCSMSKGNPLGVKAMKRILAQPIGAFGNGGKKSSS</sequence>
<keyword id="KW-1015">Disulfide bond</keyword>
<keyword id="KW-0325">Glycoprotein</keyword>
<keyword id="KW-0378">Hydrolase</keyword>
<keyword id="KW-0645">Protease</keyword>
<keyword id="KW-1185">Reference proteome</keyword>
<keyword id="KW-0346">Stress response</keyword>
<keyword id="KW-0788">Thiol protease</keyword>
<keyword id="KW-0865">Zymogen</keyword>
<feature type="propeptide" id="PRO_0000026424" description="Activation peptide" evidence="2">
    <location>
        <begin position="1" status="less than"/>
        <end position="17"/>
    </location>
</feature>
<feature type="chain" id="PRO_0000026425" description="Low-temperature-induced cysteine proteinase">
    <location>
        <begin position="18"/>
        <end position="237"/>
    </location>
</feature>
<feature type="propeptide" id="PRO_0000046019" description="Removed in mature form" evidence="1">
    <location>
        <begin position="238"/>
        <end position="346"/>
    </location>
</feature>
<feature type="active site" evidence="8">
    <location>
        <position position="42"/>
    </location>
</feature>
<feature type="active site" evidence="9">
    <location>
        <position position="178"/>
    </location>
</feature>
<feature type="active site" evidence="10">
    <location>
        <position position="198"/>
    </location>
</feature>
<feature type="glycosylation site" description="N-linked (GlcNAc...) asparagine" evidence="7">
    <location>
        <position position="215"/>
    </location>
</feature>
<feature type="disulfide bond" evidence="3">
    <location>
        <begin position="39"/>
        <end position="81"/>
    </location>
</feature>
<feature type="disulfide bond" evidence="4">
    <location>
        <begin position="73"/>
        <end position="114"/>
    </location>
</feature>
<feature type="disulfide bond" evidence="4">
    <location>
        <begin position="172"/>
        <end position="223"/>
    </location>
</feature>
<feature type="disulfide bond" evidence="5">
    <location>
        <begin position="256"/>
        <end position="268"/>
    </location>
</feature>
<feature type="disulfide bond" evidence="5">
    <location>
        <begin position="262"/>
        <end position="283"/>
    </location>
</feature>
<feature type="non-terminal residue">
    <location>
        <position position="1"/>
    </location>
</feature>
<comment type="induction">
    <text>In response to low temperature.</text>
</comment>
<comment type="similarity">
    <text evidence="8 9">Belongs to the peptidase C1 family.</text>
</comment>
<accession>P20721</accession>
<name>CYSPL_SOLLC</name>
<dbReference type="EC" id="3.4.22.-" evidence="6"/>
<dbReference type="EMBL" id="M21444">
    <property type="protein sequence ID" value="AAA66308.1"/>
    <property type="molecule type" value="mRNA"/>
</dbReference>
<dbReference type="PIR" id="JA0159">
    <property type="entry name" value="JA0159"/>
</dbReference>
<dbReference type="SMR" id="P20721"/>
<dbReference type="STRING" id="4081.P20721"/>
<dbReference type="MEROPS" id="C01.029"/>
<dbReference type="PaxDb" id="4081-Solyc12g088670.1.1"/>
<dbReference type="eggNOG" id="KOG1543">
    <property type="taxonomic scope" value="Eukaryota"/>
</dbReference>
<dbReference type="eggNOG" id="KOG4296">
    <property type="taxonomic scope" value="Eukaryota"/>
</dbReference>
<dbReference type="InParanoid" id="P20721"/>
<dbReference type="Proteomes" id="UP000004994">
    <property type="component" value="Unplaced"/>
</dbReference>
<dbReference type="ExpressionAtlas" id="P20721">
    <property type="expression patterns" value="baseline and differential"/>
</dbReference>
<dbReference type="GO" id="GO:0005615">
    <property type="term" value="C:extracellular space"/>
    <property type="evidence" value="ECO:0000318"/>
    <property type="project" value="GO_Central"/>
</dbReference>
<dbReference type="GO" id="GO:0005764">
    <property type="term" value="C:lysosome"/>
    <property type="evidence" value="ECO:0000318"/>
    <property type="project" value="GO_Central"/>
</dbReference>
<dbReference type="GO" id="GO:0004197">
    <property type="term" value="F:cysteine-type endopeptidase activity"/>
    <property type="evidence" value="ECO:0000318"/>
    <property type="project" value="GO_Central"/>
</dbReference>
<dbReference type="GO" id="GO:0051603">
    <property type="term" value="P:proteolysis involved in protein catabolic process"/>
    <property type="evidence" value="ECO:0000318"/>
    <property type="project" value="GO_Central"/>
</dbReference>
<dbReference type="CDD" id="cd02248">
    <property type="entry name" value="Peptidase_C1A"/>
    <property type="match status" value="1"/>
</dbReference>
<dbReference type="FunFam" id="3.90.70.10:FF:000332">
    <property type="entry name" value="Cathepsin L1"/>
    <property type="match status" value="1"/>
</dbReference>
<dbReference type="FunFam" id="2.10.25.160:FF:000002">
    <property type="entry name" value="Cysteine protease 1"/>
    <property type="match status" value="1"/>
</dbReference>
<dbReference type="Gene3D" id="3.90.70.10">
    <property type="entry name" value="Cysteine proteinases"/>
    <property type="match status" value="1"/>
</dbReference>
<dbReference type="Gene3D" id="2.10.25.160">
    <property type="entry name" value="Granulin"/>
    <property type="match status" value="1"/>
</dbReference>
<dbReference type="InterPro" id="IPR000118">
    <property type="entry name" value="Granulin"/>
</dbReference>
<dbReference type="InterPro" id="IPR037277">
    <property type="entry name" value="Granulin_sf"/>
</dbReference>
<dbReference type="InterPro" id="IPR038765">
    <property type="entry name" value="Papain-like_cys_pep_sf"/>
</dbReference>
<dbReference type="InterPro" id="IPR000169">
    <property type="entry name" value="Pept_cys_AS"/>
</dbReference>
<dbReference type="InterPro" id="IPR025660">
    <property type="entry name" value="Pept_his_AS"/>
</dbReference>
<dbReference type="InterPro" id="IPR013128">
    <property type="entry name" value="Peptidase_C1A"/>
</dbReference>
<dbReference type="InterPro" id="IPR000668">
    <property type="entry name" value="Peptidase_C1A_C"/>
</dbReference>
<dbReference type="InterPro" id="IPR039417">
    <property type="entry name" value="Peptidase_C1A_papain-like"/>
</dbReference>
<dbReference type="PANTHER" id="PTHR12411">
    <property type="entry name" value="CYSTEINE PROTEASE FAMILY C1-RELATED"/>
    <property type="match status" value="1"/>
</dbReference>
<dbReference type="Pfam" id="PF00396">
    <property type="entry name" value="Granulin"/>
    <property type="match status" value="1"/>
</dbReference>
<dbReference type="Pfam" id="PF00112">
    <property type="entry name" value="Peptidase_C1"/>
    <property type="match status" value="1"/>
</dbReference>
<dbReference type="PRINTS" id="PR00705">
    <property type="entry name" value="PAPAIN"/>
</dbReference>
<dbReference type="SMART" id="SM00277">
    <property type="entry name" value="GRAN"/>
    <property type="match status" value="1"/>
</dbReference>
<dbReference type="SMART" id="SM00645">
    <property type="entry name" value="Pept_C1"/>
    <property type="match status" value="1"/>
</dbReference>
<dbReference type="SUPFAM" id="SSF54001">
    <property type="entry name" value="Cysteine proteinases"/>
    <property type="match status" value="1"/>
</dbReference>
<dbReference type="SUPFAM" id="SSF57277">
    <property type="entry name" value="Granulin repeat"/>
    <property type="match status" value="1"/>
</dbReference>
<dbReference type="PROSITE" id="PS00139">
    <property type="entry name" value="THIOL_PROTEASE_CYS"/>
    <property type="match status" value="1"/>
</dbReference>
<dbReference type="PROSITE" id="PS00639">
    <property type="entry name" value="THIOL_PROTEASE_HIS"/>
    <property type="match status" value="1"/>
</dbReference>